<comment type="function">
    <text evidence="1">Required for the insertion and/or proper folding and/or complex formation of integral membrane proteins into the membrane. Involved in integration of membrane proteins that insert both dependently and independently of the Sec translocase complex, as well as at least some lipoproteins. Aids folding of multispanning membrane proteins.</text>
</comment>
<comment type="subunit">
    <text evidence="1">Interacts with the Sec translocase complex via SecD. Specifically interacts with transmembrane segments of nascent integral membrane proteins during membrane integration.</text>
</comment>
<comment type="subcellular location">
    <subcellularLocation>
        <location evidence="1">Cell inner membrane</location>
        <topology evidence="1">Multi-pass membrane protein</topology>
    </subcellularLocation>
</comment>
<comment type="similarity">
    <text evidence="1">Belongs to the OXA1/ALB3/YidC family. Type 1 subfamily.</text>
</comment>
<proteinExistence type="inferred from homology"/>
<protein>
    <recommendedName>
        <fullName evidence="1">Membrane protein insertase YidC</fullName>
    </recommendedName>
    <alternativeName>
        <fullName evidence="1">Foldase YidC</fullName>
    </alternativeName>
    <alternativeName>
        <fullName evidence="1">Membrane integrase YidC</fullName>
    </alternativeName>
    <alternativeName>
        <fullName evidence="1">Membrane protein YidC</fullName>
    </alternativeName>
</protein>
<keyword id="KW-0997">Cell inner membrane</keyword>
<keyword id="KW-1003">Cell membrane</keyword>
<keyword id="KW-0143">Chaperone</keyword>
<keyword id="KW-0472">Membrane</keyword>
<keyword id="KW-0653">Protein transport</keyword>
<keyword id="KW-1185">Reference proteome</keyword>
<keyword id="KW-0812">Transmembrane</keyword>
<keyword id="KW-1133">Transmembrane helix</keyword>
<keyword id="KW-0813">Transport</keyword>
<name>YIDC_ROSDO</name>
<sequence length="606" mass="67216">MDDQNKNLILATALSFIVILVWFVLFPPPEPEMPLTGETSTELTPDAATGSLPSVTSDTAPSVVIEGETRSAALEQAPRVEIATDRVKGSISLLGGRIDDLSLKDYRETQEEDADIVTMLSPVGSPGAYYALYGWAAGAGVDPSQVPGPDTEWQVIDGDILSVDAPVTLQWDNGAGLSFTRIIEIDDNYMFQITQSVANTSDAPVTVAPYGILARHGEPDDLKNFFILHEGVVAMADGELTETNWDDIPEFPVDQREGVPAERIENVLNGWIGFTDHFWMSVLIPDPSASARLTTKYRPRADIYQAETVLPAQTVAPGTSVSATTQLFAGAKEWETIRNYQTDGVDRFIDSIDWGWFFFLTKPIFFLLHYLNAFIGNMGWAIIGLTLIIKAILLPLAYKSYVSMAKMKELQPQMEKLKEEAGDDRQKMQQGMMELYKKEKVNPAAGCLPILLQIPIFFSLYKVIFVTIELRHAPFFGPFQDLSAPDPTSIMNLYGLLPFDGPEPGSIMALIFIGILPLLLGISMWLQQKLNPAPTDPTQQMIFAWMPWVFMFMLGGFASGLVVYWIANNTITFVQQYMIMRSQGYKPDVFGNIKGGFQKKTKPDSK</sequence>
<accession>Q16AA1</accession>
<reference key="1">
    <citation type="journal article" date="2007" name="J. Bacteriol.">
        <title>The complete genome sequence of Roseobacter denitrificans reveals a mixotrophic rather than photosynthetic metabolism.</title>
        <authorList>
            <person name="Swingley W.D."/>
            <person name="Sadekar S."/>
            <person name="Mastrian S.D."/>
            <person name="Matthies H.J."/>
            <person name="Hao J."/>
            <person name="Ramos H."/>
            <person name="Acharya C.R."/>
            <person name="Conrad A.L."/>
            <person name="Taylor H.L."/>
            <person name="Dejesa L.C."/>
            <person name="Shah M.K."/>
            <person name="O'Huallachain M.E."/>
            <person name="Lince M.T."/>
            <person name="Blankenship R.E."/>
            <person name="Beatty J.T."/>
            <person name="Touchman J.W."/>
        </authorList>
    </citation>
    <scope>NUCLEOTIDE SEQUENCE [LARGE SCALE GENOMIC DNA]</scope>
    <source>
        <strain>ATCC 33942 / OCh 114</strain>
    </source>
</reference>
<dbReference type="EMBL" id="CP000362">
    <property type="protein sequence ID" value="ABG31092.1"/>
    <property type="molecule type" value="Genomic_DNA"/>
</dbReference>
<dbReference type="RefSeq" id="WP_011567712.1">
    <property type="nucleotide sequence ID" value="NC_008209.1"/>
</dbReference>
<dbReference type="SMR" id="Q16AA1"/>
<dbReference type="STRING" id="375451.RD1_1455"/>
<dbReference type="KEGG" id="rde:RD1_1455"/>
<dbReference type="eggNOG" id="COG0706">
    <property type="taxonomic scope" value="Bacteria"/>
</dbReference>
<dbReference type="HOGENOM" id="CLU_016535_1_0_5"/>
<dbReference type="OrthoDB" id="9780552at2"/>
<dbReference type="Proteomes" id="UP000007029">
    <property type="component" value="Chromosome"/>
</dbReference>
<dbReference type="GO" id="GO:0005886">
    <property type="term" value="C:plasma membrane"/>
    <property type="evidence" value="ECO:0007669"/>
    <property type="project" value="UniProtKB-SubCell"/>
</dbReference>
<dbReference type="GO" id="GO:0032977">
    <property type="term" value="F:membrane insertase activity"/>
    <property type="evidence" value="ECO:0007669"/>
    <property type="project" value="InterPro"/>
</dbReference>
<dbReference type="GO" id="GO:0051205">
    <property type="term" value="P:protein insertion into membrane"/>
    <property type="evidence" value="ECO:0007669"/>
    <property type="project" value="TreeGrafter"/>
</dbReference>
<dbReference type="GO" id="GO:0015031">
    <property type="term" value="P:protein transport"/>
    <property type="evidence" value="ECO:0007669"/>
    <property type="project" value="UniProtKB-KW"/>
</dbReference>
<dbReference type="CDD" id="cd20070">
    <property type="entry name" value="5TM_YidC_Alb3"/>
    <property type="match status" value="1"/>
</dbReference>
<dbReference type="CDD" id="cd19961">
    <property type="entry name" value="EcYidC-like_peri"/>
    <property type="match status" value="1"/>
</dbReference>
<dbReference type="Gene3D" id="2.70.98.90">
    <property type="match status" value="1"/>
</dbReference>
<dbReference type="HAMAP" id="MF_01810">
    <property type="entry name" value="YidC_type1"/>
    <property type="match status" value="1"/>
</dbReference>
<dbReference type="InterPro" id="IPR019998">
    <property type="entry name" value="Membr_insert_YidC"/>
</dbReference>
<dbReference type="InterPro" id="IPR028053">
    <property type="entry name" value="Membr_insert_YidC_N"/>
</dbReference>
<dbReference type="InterPro" id="IPR001708">
    <property type="entry name" value="YidC/ALB3/OXA1/COX18"/>
</dbReference>
<dbReference type="InterPro" id="IPR028055">
    <property type="entry name" value="YidC/Oxa/ALB_C"/>
</dbReference>
<dbReference type="InterPro" id="IPR047196">
    <property type="entry name" value="YidC_ALB_C"/>
</dbReference>
<dbReference type="InterPro" id="IPR038221">
    <property type="entry name" value="YidC_periplasmic_sf"/>
</dbReference>
<dbReference type="NCBIfam" id="NF002353">
    <property type="entry name" value="PRK01318.1-4"/>
    <property type="match status" value="1"/>
</dbReference>
<dbReference type="NCBIfam" id="TIGR03593">
    <property type="entry name" value="yidC_nterm"/>
    <property type="match status" value="1"/>
</dbReference>
<dbReference type="NCBIfam" id="TIGR03592">
    <property type="entry name" value="yidC_oxa1_cterm"/>
    <property type="match status" value="1"/>
</dbReference>
<dbReference type="PANTHER" id="PTHR12428:SF65">
    <property type="entry name" value="CYTOCHROME C OXIDASE ASSEMBLY PROTEIN COX18, MITOCHONDRIAL"/>
    <property type="match status" value="1"/>
</dbReference>
<dbReference type="PANTHER" id="PTHR12428">
    <property type="entry name" value="OXA1"/>
    <property type="match status" value="1"/>
</dbReference>
<dbReference type="Pfam" id="PF02096">
    <property type="entry name" value="60KD_IMP"/>
    <property type="match status" value="1"/>
</dbReference>
<dbReference type="Pfam" id="PF14849">
    <property type="entry name" value="YidC_periplas"/>
    <property type="match status" value="1"/>
</dbReference>
<dbReference type="PRINTS" id="PR00701">
    <property type="entry name" value="60KDINNERMP"/>
</dbReference>
<dbReference type="PRINTS" id="PR01900">
    <property type="entry name" value="YIDCPROTEIN"/>
</dbReference>
<feature type="chain" id="PRO_1000070159" description="Membrane protein insertase YidC">
    <location>
        <begin position="1"/>
        <end position="606"/>
    </location>
</feature>
<feature type="transmembrane region" description="Helical" evidence="1">
    <location>
        <begin position="8"/>
        <end position="28"/>
    </location>
</feature>
<feature type="transmembrane region" description="Helical" evidence="1">
    <location>
        <begin position="116"/>
        <end position="136"/>
    </location>
</feature>
<feature type="transmembrane region" description="Helical" evidence="1">
    <location>
        <begin position="348"/>
        <end position="368"/>
    </location>
</feature>
<feature type="transmembrane region" description="Helical" evidence="1">
    <location>
        <begin position="374"/>
        <end position="394"/>
    </location>
</feature>
<feature type="transmembrane region" description="Helical" evidence="1">
    <location>
        <begin position="448"/>
        <end position="468"/>
    </location>
</feature>
<feature type="transmembrane region" description="Helical" evidence="1">
    <location>
        <begin position="506"/>
        <end position="526"/>
    </location>
</feature>
<feature type="transmembrane region" description="Helical" evidence="1">
    <location>
        <begin position="542"/>
        <end position="562"/>
    </location>
</feature>
<feature type="region of interest" description="Disordered" evidence="2">
    <location>
        <begin position="33"/>
        <end position="59"/>
    </location>
</feature>
<organism>
    <name type="scientific">Roseobacter denitrificans (strain ATCC 33942 / OCh 114)</name>
    <name type="common">Erythrobacter sp. (strain OCh 114)</name>
    <name type="synonym">Roseobacter denitrificans</name>
    <dbReference type="NCBI Taxonomy" id="375451"/>
    <lineage>
        <taxon>Bacteria</taxon>
        <taxon>Pseudomonadati</taxon>
        <taxon>Pseudomonadota</taxon>
        <taxon>Alphaproteobacteria</taxon>
        <taxon>Rhodobacterales</taxon>
        <taxon>Roseobacteraceae</taxon>
        <taxon>Roseobacter</taxon>
    </lineage>
</organism>
<gene>
    <name evidence="1" type="primary">yidC</name>
    <name type="ordered locus">RD1_1455</name>
</gene>
<evidence type="ECO:0000255" key="1">
    <source>
        <dbReference type="HAMAP-Rule" id="MF_01810"/>
    </source>
</evidence>
<evidence type="ECO:0000256" key="2">
    <source>
        <dbReference type="SAM" id="MobiDB-lite"/>
    </source>
</evidence>